<sequence>MRAYWFDNLEGDQRQPHDSGRAVDPAYLSKLGVLYHHISSQSEVDELAKARDYKNRDEITVSPEKMGDIYEEKVKSFFHEHLHEDEEIRYILDGAGYFDVRSEGDDWVRIWLEKGDLIILPSGIYHRFTTDEQNYTKAMRLFKDEPKWTPLNRGEETDENQFRQEYLKLRQGLAA</sequence>
<feature type="chain" id="PRO_0000414364" description="Acireductone dioxygenase">
    <location>
        <begin position="1"/>
        <end position="175"/>
    </location>
</feature>
<feature type="binding site" evidence="1">
    <location>
        <position position="81"/>
    </location>
    <ligand>
        <name>Fe(2+)</name>
        <dbReference type="ChEBI" id="CHEBI:29033"/>
        <note>for iron-dependent acireductone dioxygenase activity</note>
    </ligand>
</feature>
<feature type="binding site" evidence="1">
    <location>
        <position position="81"/>
    </location>
    <ligand>
        <name>Ni(2+)</name>
        <dbReference type="ChEBI" id="CHEBI:49786"/>
        <note>for nickel-dependent acireductone dioxygenase activity</note>
    </ligand>
</feature>
<feature type="binding site" evidence="1">
    <location>
        <position position="83"/>
    </location>
    <ligand>
        <name>Fe(2+)</name>
        <dbReference type="ChEBI" id="CHEBI:29033"/>
        <note>for iron-dependent acireductone dioxygenase activity</note>
    </ligand>
</feature>
<feature type="binding site" evidence="1">
    <location>
        <position position="83"/>
    </location>
    <ligand>
        <name>Ni(2+)</name>
        <dbReference type="ChEBI" id="CHEBI:49786"/>
        <note>for nickel-dependent acireductone dioxygenase activity</note>
    </ligand>
</feature>
<feature type="binding site" evidence="1">
    <location>
        <position position="87"/>
    </location>
    <ligand>
        <name>Fe(2+)</name>
        <dbReference type="ChEBI" id="CHEBI:29033"/>
        <note>for iron-dependent acireductone dioxygenase activity</note>
    </ligand>
</feature>
<feature type="binding site" evidence="1">
    <location>
        <position position="87"/>
    </location>
    <ligand>
        <name>Ni(2+)</name>
        <dbReference type="ChEBI" id="CHEBI:49786"/>
        <note>for nickel-dependent acireductone dioxygenase activity</note>
    </ligand>
</feature>
<feature type="binding site" evidence="1">
    <location>
        <position position="126"/>
    </location>
    <ligand>
        <name>Fe(2+)</name>
        <dbReference type="ChEBI" id="CHEBI:29033"/>
        <note>for iron-dependent acireductone dioxygenase activity</note>
    </ligand>
</feature>
<feature type="binding site" evidence="1">
    <location>
        <position position="126"/>
    </location>
    <ligand>
        <name>Ni(2+)</name>
        <dbReference type="ChEBI" id="CHEBI:49786"/>
        <note>for nickel-dependent acireductone dioxygenase activity</note>
    </ligand>
</feature>
<dbReference type="EC" id="1.13.11.54" evidence="1"/>
<dbReference type="EC" id="1.13.11.53" evidence="1"/>
<dbReference type="EMBL" id="CH445338">
    <property type="protein sequence ID" value="EAT83415.2"/>
    <property type="molecule type" value="Genomic_DNA"/>
</dbReference>
<dbReference type="RefSeq" id="XP_001799522.1">
    <property type="nucleotide sequence ID" value="XM_001799470.1"/>
</dbReference>
<dbReference type="SMR" id="Q0UG91"/>
<dbReference type="FunCoup" id="Q0UG91">
    <property type="interactions" value="241"/>
</dbReference>
<dbReference type="STRING" id="321614.Q0UG91"/>
<dbReference type="EnsemblFungi" id="SNOT_09223">
    <property type="protein sequence ID" value="SNOT_09223"/>
    <property type="gene ID" value="SNOG_09223"/>
</dbReference>
<dbReference type="GeneID" id="5976423"/>
<dbReference type="KEGG" id="pno:SNOG_09223"/>
<dbReference type="VEuPathDB" id="FungiDB:JI435_092230"/>
<dbReference type="eggNOG" id="KOG2107">
    <property type="taxonomic scope" value="Eukaryota"/>
</dbReference>
<dbReference type="HOGENOM" id="CLU_090154_1_0_1"/>
<dbReference type="InParanoid" id="Q0UG91"/>
<dbReference type="UniPathway" id="UPA00904">
    <property type="reaction ID" value="UER00878"/>
</dbReference>
<dbReference type="Proteomes" id="UP000001055">
    <property type="component" value="Unassembled WGS sequence"/>
</dbReference>
<dbReference type="GO" id="GO:0005737">
    <property type="term" value="C:cytoplasm"/>
    <property type="evidence" value="ECO:0007669"/>
    <property type="project" value="UniProtKB-SubCell"/>
</dbReference>
<dbReference type="GO" id="GO:0005634">
    <property type="term" value="C:nucleus"/>
    <property type="evidence" value="ECO:0007669"/>
    <property type="project" value="UniProtKB-SubCell"/>
</dbReference>
<dbReference type="GO" id="GO:0010308">
    <property type="term" value="F:acireductone dioxygenase (Ni2+-requiring) activity"/>
    <property type="evidence" value="ECO:0007669"/>
    <property type="project" value="UniProtKB-UniRule"/>
</dbReference>
<dbReference type="GO" id="GO:0010309">
    <property type="term" value="F:acireductone dioxygenase [iron(II)-requiring] activity"/>
    <property type="evidence" value="ECO:0000318"/>
    <property type="project" value="GO_Central"/>
</dbReference>
<dbReference type="GO" id="GO:0005506">
    <property type="term" value="F:iron ion binding"/>
    <property type="evidence" value="ECO:0007669"/>
    <property type="project" value="UniProtKB-UniRule"/>
</dbReference>
<dbReference type="GO" id="GO:0016151">
    <property type="term" value="F:nickel cation binding"/>
    <property type="evidence" value="ECO:0007669"/>
    <property type="project" value="UniProtKB-UniRule"/>
</dbReference>
<dbReference type="GO" id="GO:0019509">
    <property type="term" value="P:L-methionine salvage from methylthioadenosine"/>
    <property type="evidence" value="ECO:0007669"/>
    <property type="project" value="UniProtKB-UniRule"/>
</dbReference>
<dbReference type="GO" id="GO:0006555">
    <property type="term" value="P:methionine metabolic process"/>
    <property type="evidence" value="ECO:0000318"/>
    <property type="project" value="GO_Central"/>
</dbReference>
<dbReference type="CDD" id="cd02232">
    <property type="entry name" value="cupin_ARD"/>
    <property type="match status" value="1"/>
</dbReference>
<dbReference type="FunFam" id="2.60.120.10:FF:000079">
    <property type="entry name" value="1,2-dihydroxy-3-keto-5-methylthiopentene dioxygenase"/>
    <property type="match status" value="1"/>
</dbReference>
<dbReference type="Gene3D" id="2.60.120.10">
    <property type="entry name" value="Jelly Rolls"/>
    <property type="match status" value="1"/>
</dbReference>
<dbReference type="HAMAP" id="MF_03154">
    <property type="entry name" value="Salvage_MtnD_euk"/>
    <property type="match status" value="1"/>
</dbReference>
<dbReference type="InterPro" id="IPR004313">
    <property type="entry name" value="ARD"/>
</dbReference>
<dbReference type="InterPro" id="IPR027496">
    <property type="entry name" value="ARD_euk"/>
</dbReference>
<dbReference type="InterPro" id="IPR014710">
    <property type="entry name" value="RmlC-like_jellyroll"/>
</dbReference>
<dbReference type="InterPro" id="IPR011051">
    <property type="entry name" value="RmlC_Cupin_sf"/>
</dbReference>
<dbReference type="PANTHER" id="PTHR23418">
    <property type="entry name" value="ACIREDUCTONE DIOXYGENASE"/>
    <property type="match status" value="1"/>
</dbReference>
<dbReference type="PANTHER" id="PTHR23418:SF0">
    <property type="entry name" value="ACIREDUCTONE DIOXYGENASE"/>
    <property type="match status" value="1"/>
</dbReference>
<dbReference type="Pfam" id="PF03079">
    <property type="entry name" value="ARD"/>
    <property type="match status" value="1"/>
</dbReference>
<dbReference type="SUPFAM" id="SSF51182">
    <property type="entry name" value="RmlC-like cupins"/>
    <property type="match status" value="1"/>
</dbReference>
<keyword id="KW-0028">Amino-acid biosynthesis</keyword>
<keyword id="KW-0963">Cytoplasm</keyword>
<keyword id="KW-0223">Dioxygenase</keyword>
<keyword id="KW-0408">Iron</keyword>
<keyword id="KW-0479">Metal-binding</keyword>
<keyword id="KW-0486">Methionine biosynthesis</keyword>
<keyword id="KW-0533">Nickel</keyword>
<keyword id="KW-0539">Nucleus</keyword>
<keyword id="KW-0560">Oxidoreductase</keyword>
<proteinExistence type="inferred from homology"/>
<name>MTND_PHANO</name>
<gene>
    <name evidence="1" type="primary">ADI1</name>
    <name type="ORF">SNOG_09223</name>
</gene>
<accession>Q0UG91</accession>
<evidence type="ECO:0000255" key="1">
    <source>
        <dbReference type="HAMAP-Rule" id="MF_03154"/>
    </source>
</evidence>
<protein>
    <recommendedName>
        <fullName evidence="1">Acireductone dioxygenase</fullName>
    </recommendedName>
    <alternativeName>
        <fullName evidence="1">Acireductone dioxygenase (Fe(2+)-requiring)</fullName>
        <shortName evidence="1">ARD'</shortName>
        <shortName evidence="1">Fe-ARD</shortName>
        <ecNumber evidence="1">1.13.11.54</ecNumber>
    </alternativeName>
    <alternativeName>
        <fullName evidence="1">Acireductone dioxygenase (Ni(2+)-requiring)</fullName>
        <shortName evidence="1">ARD</shortName>
        <shortName evidence="1">Ni-ARD</shortName>
        <ecNumber evidence="1">1.13.11.53</ecNumber>
    </alternativeName>
</protein>
<comment type="function">
    <text evidence="1">Catalyzes 2 different reactions between oxygen and the acireductone 1,2-dihydroxy-3-keto-5-methylthiopentene (DHK-MTPene) depending upon the metal bound in the active site. Fe-containing acireductone dioxygenase (Fe-ARD) produces formate and 2-keto-4-methylthiobutyrate (KMTB), the alpha-ketoacid precursor of methionine in the methionine recycle pathway. Ni-containing acireductone dioxygenase (Ni-ARD) produces methylthiopropionate, carbon monoxide and formate, and does not lie on the methionine recycle pathway.</text>
</comment>
<comment type="catalytic activity">
    <reaction evidence="1">
        <text>1,2-dihydroxy-5-(methylsulfanyl)pent-1-en-3-one + O2 = 4-methylsulfanyl-2-oxobutanoate + formate + 2 H(+)</text>
        <dbReference type="Rhea" id="RHEA:24504"/>
        <dbReference type="ChEBI" id="CHEBI:15378"/>
        <dbReference type="ChEBI" id="CHEBI:15379"/>
        <dbReference type="ChEBI" id="CHEBI:15740"/>
        <dbReference type="ChEBI" id="CHEBI:16723"/>
        <dbReference type="ChEBI" id="CHEBI:49252"/>
        <dbReference type="EC" id="1.13.11.54"/>
    </reaction>
</comment>
<comment type="catalytic activity">
    <reaction evidence="1">
        <text>1,2-dihydroxy-5-(methylsulfanyl)pent-1-en-3-one + O2 = 3-(methylsulfanyl)propanoate + CO + formate + 2 H(+)</text>
        <dbReference type="Rhea" id="RHEA:14161"/>
        <dbReference type="ChEBI" id="CHEBI:15378"/>
        <dbReference type="ChEBI" id="CHEBI:15379"/>
        <dbReference type="ChEBI" id="CHEBI:15740"/>
        <dbReference type="ChEBI" id="CHEBI:17245"/>
        <dbReference type="ChEBI" id="CHEBI:49016"/>
        <dbReference type="ChEBI" id="CHEBI:49252"/>
        <dbReference type="EC" id="1.13.11.53"/>
    </reaction>
</comment>
<comment type="cofactor">
    <cofactor evidence="1">
        <name>Fe(2+)</name>
        <dbReference type="ChEBI" id="CHEBI:29033"/>
    </cofactor>
    <cofactor evidence="1">
        <name>Ni(2+)</name>
        <dbReference type="ChEBI" id="CHEBI:49786"/>
    </cofactor>
    <text evidence="1">Binds either 1 Fe or Ni cation per monomer. Iron-binding promotes an acireductone dioxygenase reaction producing 2-keto-4-methylthiobutyrate, while nickel-binding promotes an acireductone dioxygenase reaction producing 3-(methylsulfanyl)propanoate.</text>
</comment>
<comment type="pathway">
    <text evidence="1">Amino-acid biosynthesis; L-methionine biosynthesis via salvage pathway; L-methionine from S-methyl-5-thio-alpha-D-ribose 1-phosphate: step 5/6.</text>
</comment>
<comment type="subcellular location">
    <subcellularLocation>
        <location evidence="1">Cytoplasm</location>
    </subcellularLocation>
    <subcellularLocation>
        <location evidence="1">Nucleus</location>
    </subcellularLocation>
</comment>
<comment type="similarity">
    <text evidence="1">Belongs to the acireductone dioxygenase (ARD) family.</text>
</comment>
<reference key="1">
    <citation type="journal article" date="2007" name="Plant Cell">
        <title>Dothideomycete-plant interactions illuminated by genome sequencing and EST analysis of the wheat pathogen Stagonospora nodorum.</title>
        <authorList>
            <person name="Hane J.K."/>
            <person name="Lowe R.G.T."/>
            <person name="Solomon P.S."/>
            <person name="Tan K.-C."/>
            <person name="Schoch C.L."/>
            <person name="Spatafora J.W."/>
            <person name="Crous P.W."/>
            <person name="Kodira C.D."/>
            <person name="Birren B.W."/>
            <person name="Galagan J.E."/>
            <person name="Torriani S.F.F."/>
            <person name="McDonald B.A."/>
            <person name="Oliver R.P."/>
        </authorList>
    </citation>
    <scope>NUCLEOTIDE SEQUENCE [LARGE SCALE GENOMIC DNA]</scope>
    <source>
        <strain>SN15 / ATCC MYA-4574 / FGSC 10173</strain>
    </source>
</reference>
<organism>
    <name type="scientific">Phaeosphaeria nodorum (strain SN15 / ATCC MYA-4574 / FGSC 10173)</name>
    <name type="common">Glume blotch fungus</name>
    <name type="synonym">Parastagonospora nodorum</name>
    <dbReference type="NCBI Taxonomy" id="321614"/>
    <lineage>
        <taxon>Eukaryota</taxon>
        <taxon>Fungi</taxon>
        <taxon>Dikarya</taxon>
        <taxon>Ascomycota</taxon>
        <taxon>Pezizomycotina</taxon>
        <taxon>Dothideomycetes</taxon>
        <taxon>Pleosporomycetidae</taxon>
        <taxon>Pleosporales</taxon>
        <taxon>Pleosporineae</taxon>
        <taxon>Phaeosphaeriaceae</taxon>
        <taxon>Parastagonospora</taxon>
    </lineage>
</organism>